<proteinExistence type="inferred from homology"/>
<name>GRPE_CAMLR</name>
<reference key="1">
    <citation type="journal article" date="2008" name="Foodborne Pathog. Dis.">
        <title>The complete genome sequence and analysis of the human pathogen Campylobacter lari.</title>
        <authorList>
            <person name="Miller W.G."/>
            <person name="Wang G."/>
            <person name="Binnewies T.T."/>
            <person name="Parker C.T."/>
        </authorList>
    </citation>
    <scope>NUCLEOTIDE SEQUENCE [LARGE SCALE GENOMIC DNA]</scope>
    <source>
        <strain>RM2100 / D67 / ATCC BAA-1060</strain>
    </source>
</reference>
<keyword id="KW-0143">Chaperone</keyword>
<keyword id="KW-0963">Cytoplasm</keyword>
<keyword id="KW-1185">Reference proteome</keyword>
<keyword id="KW-0346">Stress response</keyword>
<gene>
    <name evidence="1" type="primary">grpE</name>
    <name type="ordered locus">Cla_0936</name>
</gene>
<protein>
    <recommendedName>
        <fullName evidence="1">Protein GrpE</fullName>
    </recommendedName>
    <alternativeName>
        <fullName evidence="1">HSP-70 cofactor</fullName>
    </alternativeName>
</protein>
<comment type="function">
    <text evidence="1">Participates actively in the response to hyperosmotic and heat shock by preventing the aggregation of stress-denatured proteins, in association with DnaK and GrpE. It is the nucleotide exchange factor for DnaK and may function as a thermosensor. Unfolded proteins bind initially to DnaJ; upon interaction with the DnaJ-bound protein, DnaK hydrolyzes its bound ATP, resulting in the formation of a stable complex. GrpE releases ADP from DnaK; ATP binding to DnaK triggers the release of the substrate protein, thus completing the reaction cycle. Several rounds of ATP-dependent interactions between DnaJ, DnaK and GrpE are required for fully efficient folding.</text>
</comment>
<comment type="subunit">
    <text evidence="1">Homodimer.</text>
</comment>
<comment type="subcellular location">
    <subcellularLocation>
        <location evidence="1">Cytoplasm</location>
    </subcellularLocation>
</comment>
<comment type="similarity">
    <text evidence="1">Belongs to the GrpE family.</text>
</comment>
<feature type="chain" id="PRO_1000164182" description="Protein GrpE">
    <location>
        <begin position="1"/>
        <end position="169"/>
    </location>
</feature>
<feature type="region of interest" description="Disordered" evidence="2">
    <location>
        <begin position="1"/>
        <end position="25"/>
    </location>
</feature>
<feature type="compositionally biased region" description="Polar residues" evidence="2">
    <location>
        <begin position="7"/>
        <end position="23"/>
    </location>
</feature>
<sequence length="169" mass="19363">MSEEKQNGQIQEETVENSENQNNELEKLQAEYNELKDTYLRANAEFENIKKRMEKEKISATIYANESFAKDLLDVVDALEAAVNVEANDEISLKIKEGVQNTLDLLLKKLEKHMVKVIDAEGEFDPNLHEAMFHVESADHESNHIVQLLQKGYMMNDRIIRSAKVSVAK</sequence>
<accession>B9KCH1</accession>
<organism>
    <name type="scientific">Campylobacter lari (strain RM2100 / D67 / ATCC BAA-1060)</name>
    <dbReference type="NCBI Taxonomy" id="306263"/>
    <lineage>
        <taxon>Bacteria</taxon>
        <taxon>Pseudomonadati</taxon>
        <taxon>Campylobacterota</taxon>
        <taxon>Epsilonproteobacteria</taxon>
        <taxon>Campylobacterales</taxon>
        <taxon>Campylobacteraceae</taxon>
        <taxon>Campylobacter</taxon>
    </lineage>
</organism>
<evidence type="ECO:0000255" key="1">
    <source>
        <dbReference type="HAMAP-Rule" id="MF_01151"/>
    </source>
</evidence>
<evidence type="ECO:0000256" key="2">
    <source>
        <dbReference type="SAM" id="MobiDB-lite"/>
    </source>
</evidence>
<dbReference type="EMBL" id="CP000932">
    <property type="protein sequence ID" value="ACM64260.1"/>
    <property type="molecule type" value="Genomic_DNA"/>
</dbReference>
<dbReference type="RefSeq" id="WP_012661643.1">
    <property type="nucleotide sequence ID" value="NC_012039.1"/>
</dbReference>
<dbReference type="SMR" id="B9KCH1"/>
<dbReference type="STRING" id="306263.Cla_0936"/>
<dbReference type="KEGG" id="cla:CLA_0936"/>
<dbReference type="PATRIC" id="fig|306263.5.peg.919"/>
<dbReference type="eggNOG" id="COG0576">
    <property type="taxonomic scope" value="Bacteria"/>
</dbReference>
<dbReference type="HOGENOM" id="CLU_057217_6_3_7"/>
<dbReference type="Proteomes" id="UP000007727">
    <property type="component" value="Chromosome"/>
</dbReference>
<dbReference type="GO" id="GO:0005829">
    <property type="term" value="C:cytosol"/>
    <property type="evidence" value="ECO:0007669"/>
    <property type="project" value="TreeGrafter"/>
</dbReference>
<dbReference type="GO" id="GO:0000774">
    <property type="term" value="F:adenyl-nucleotide exchange factor activity"/>
    <property type="evidence" value="ECO:0007669"/>
    <property type="project" value="InterPro"/>
</dbReference>
<dbReference type="GO" id="GO:0042803">
    <property type="term" value="F:protein homodimerization activity"/>
    <property type="evidence" value="ECO:0007669"/>
    <property type="project" value="InterPro"/>
</dbReference>
<dbReference type="GO" id="GO:0051087">
    <property type="term" value="F:protein-folding chaperone binding"/>
    <property type="evidence" value="ECO:0007669"/>
    <property type="project" value="InterPro"/>
</dbReference>
<dbReference type="GO" id="GO:0051082">
    <property type="term" value="F:unfolded protein binding"/>
    <property type="evidence" value="ECO:0007669"/>
    <property type="project" value="TreeGrafter"/>
</dbReference>
<dbReference type="GO" id="GO:0006457">
    <property type="term" value="P:protein folding"/>
    <property type="evidence" value="ECO:0007669"/>
    <property type="project" value="InterPro"/>
</dbReference>
<dbReference type="CDD" id="cd00446">
    <property type="entry name" value="GrpE"/>
    <property type="match status" value="1"/>
</dbReference>
<dbReference type="FunFam" id="2.30.22.10:FF:000001">
    <property type="entry name" value="Protein GrpE"/>
    <property type="match status" value="1"/>
</dbReference>
<dbReference type="Gene3D" id="3.90.20.20">
    <property type="match status" value="1"/>
</dbReference>
<dbReference type="Gene3D" id="2.30.22.10">
    <property type="entry name" value="Head domain of nucleotide exchange factor GrpE"/>
    <property type="match status" value="1"/>
</dbReference>
<dbReference type="HAMAP" id="MF_01151">
    <property type="entry name" value="GrpE"/>
    <property type="match status" value="1"/>
</dbReference>
<dbReference type="InterPro" id="IPR000740">
    <property type="entry name" value="GrpE"/>
</dbReference>
<dbReference type="InterPro" id="IPR013805">
    <property type="entry name" value="GrpE_coiled_coil"/>
</dbReference>
<dbReference type="InterPro" id="IPR009012">
    <property type="entry name" value="GrpE_head"/>
</dbReference>
<dbReference type="NCBIfam" id="NF010738">
    <property type="entry name" value="PRK14140.1"/>
    <property type="match status" value="1"/>
</dbReference>
<dbReference type="NCBIfam" id="NF010756">
    <property type="entry name" value="PRK14159.1"/>
    <property type="match status" value="1"/>
</dbReference>
<dbReference type="PANTHER" id="PTHR21237">
    <property type="entry name" value="GRPE PROTEIN"/>
    <property type="match status" value="1"/>
</dbReference>
<dbReference type="PANTHER" id="PTHR21237:SF23">
    <property type="entry name" value="GRPE PROTEIN HOMOLOG, MITOCHONDRIAL"/>
    <property type="match status" value="1"/>
</dbReference>
<dbReference type="Pfam" id="PF01025">
    <property type="entry name" value="GrpE"/>
    <property type="match status" value="1"/>
</dbReference>
<dbReference type="PRINTS" id="PR00773">
    <property type="entry name" value="GRPEPROTEIN"/>
</dbReference>
<dbReference type="SUPFAM" id="SSF58014">
    <property type="entry name" value="Coiled-coil domain of nucleotide exchange factor GrpE"/>
    <property type="match status" value="1"/>
</dbReference>
<dbReference type="SUPFAM" id="SSF51064">
    <property type="entry name" value="Head domain of nucleotide exchange factor GrpE"/>
    <property type="match status" value="1"/>
</dbReference>
<dbReference type="PROSITE" id="PS01071">
    <property type="entry name" value="GRPE"/>
    <property type="match status" value="1"/>
</dbReference>